<dbReference type="EC" id="2.7.1.25" evidence="1"/>
<dbReference type="EMBL" id="CP000753">
    <property type="protein sequence ID" value="ABS07085.1"/>
    <property type="molecule type" value="Genomic_DNA"/>
</dbReference>
<dbReference type="RefSeq" id="WP_006082881.1">
    <property type="nucleotide sequence ID" value="NC_009665.1"/>
</dbReference>
<dbReference type="SMR" id="A6WJU6"/>
<dbReference type="KEGG" id="sbm:Shew185_0931"/>
<dbReference type="HOGENOM" id="CLU_046932_1_0_6"/>
<dbReference type="UniPathway" id="UPA00140">
    <property type="reaction ID" value="UER00205"/>
</dbReference>
<dbReference type="GO" id="GO:0004020">
    <property type="term" value="F:adenylylsulfate kinase activity"/>
    <property type="evidence" value="ECO:0007669"/>
    <property type="project" value="UniProtKB-UniRule"/>
</dbReference>
<dbReference type="GO" id="GO:0005524">
    <property type="term" value="F:ATP binding"/>
    <property type="evidence" value="ECO:0007669"/>
    <property type="project" value="UniProtKB-UniRule"/>
</dbReference>
<dbReference type="GO" id="GO:0070814">
    <property type="term" value="P:hydrogen sulfide biosynthetic process"/>
    <property type="evidence" value="ECO:0007669"/>
    <property type="project" value="UniProtKB-UniRule"/>
</dbReference>
<dbReference type="GO" id="GO:0000103">
    <property type="term" value="P:sulfate assimilation"/>
    <property type="evidence" value="ECO:0007669"/>
    <property type="project" value="UniProtKB-UniRule"/>
</dbReference>
<dbReference type="CDD" id="cd02027">
    <property type="entry name" value="APSK"/>
    <property type="match status" value="1"/>
</dbReference>
<dbReference type="FunFam" id="3.40.50.300:FF:000212">
    <property type="entry name" value="Adenylyl-sulfate kinase"/>
    <property type="match status" value="1"/>
</dbReference>
<dbReference type="Gene3D" id="3.40.50.300">
    <property type="entry name" value="P-loop containing nucleotide triphosphate hydrolases"/>
    <property type="match status" value="1"/>
</dbReference>
<dbReference type="HAMAP" id="MF_00065">
    <property type="entry name" value="Adenylyl_sulf_kinase"/>
    <property type="match status" value="1"/>
</dbReference>
<dbReference type="InterPro" id="IPR002891">
    <property type="entry name" value="APS_kinase"/>
</dbReference>
<dbReference type="InterPro" id="IPR027417">
    <property type="entry name" value="P-loop_NTPase"/>
</dbReference>
<dbReference type="NCBIfam" id="TIGR00455">
    <property type="entry name" value="apsK"/>
    <property type="match status" value="1"/>
</dbReference>
<dbReference type="NCBIfam" id="NF003013">
    <property type="entry name" value="PRK03846.1"/>
    <property type="match status" value="1"/>
</dbReference>
<dbReference type="PANTHER" id="PTHR11055:SF63">
    <property type="entry name" value="ADENYLYL-SULFATE KINASE 1, CHLOROPLASTIC"/>
    <property type="match status" value="1"/>
</dbReference>
<dbReference type="PANTHER" id="PTHR11055">
    <property type="entry name" value="BIFUNCTIONAL 3'-PHOSPHOADENOSINE 5'-PHOSPHOSULFATE SYNTHASE"/>
    <property type="match status" value="1"/>
</dbReference>
<dbReference type="Pfam" id="PF01583">
    <property type="entry name" value="APS_kinase"/>
    <property type="match status" value="1"/>
</dbReference>
<dbReference type="SUPFAM" id="SSF52540">
    <property type="entry name" value="P-loop containing nucleoside triphosphate hydrolases"/>
    <property type="match status" value="1"/>
</dbReference>
<sequence length="205" mass="22320">MTNIVWHQHPVDQAARAEQKGQNPVLLWFTGLSGAGKSTLAGALERALFEAGFHTYLLDGDNVRHGLCKDLGFTVEDRDENLRRVGEVAKLMVDAGLVVLSAFISPTREERDSIRARFPASQFIEVHVSTPLSVCEQRDPKGLYVKARSGEISNFTGISSPYEAPLAAELTIDTSKGDLATQVRALIDYLTAINVINADKAKALA</sequence>
<reference key="1">
    <citation type="submission" date="2007-07" db="EMBL/GenBank/DDBJ databases">
        <title>Complete sequence of chromosome of Shewanella baltica OS185.</title>
        <authorList>
            <consortium name="US DOE Joint Genome Institute"/>
            <person name="Copeland A."/>
            <person name="Lucas S."/>
            <person name="Lapidus A."/>
            <person name="Barry K."/>
            <person name="Glavina del Rio T."/>
            <person name="Dalin E."/>
            <person name="Tice H."/>
            <person name="Pitluck S."/>
            <person name="Sims D."/>
            <person name="Brettin T."/>
            <person name="Bruce D."/>
            <person name="Detter J.C."/>
            <person name="Han C."/>
            <person name="Schmutz J."/>
            <person name="Larimer F."/>
            <person name="Land M."/>
            <person name="Hauser L."/>
            <person name="Kyrpides N."/>
            <person name="Mikhailova N."/>
            <person name="Brettar I."/>
            <person name="Rodrigues J."/>
            <person name="Konstantinidis K."/>
            <person name="Tiedje J."/>
            <person name="Richardson P."/>
        </authorList>
    </citation>
    <scope>NUCLEOTIDE SEQUENCE [LARGE SCALE GENOMIC DNA]</scope>
    <source>
        <strain>OS185</strain>
    </source>
</reference>
<name>CYSC_SHEB8</name>
<keyword id="KW-0067">ATP-binding</keyword>
<keyword id="KW-0418">Kinase</keyword>
<keyword id="KW-0547">Nucleotide-binding</keyword>
<keyword id="KW-0597">Phosphoprotein</keyword>
<keyword id="KW-0808">Transferase</keyword>
<feature type="chain" id="PRO_1000009023" description="Adenylyl-sulfate kinase">
    <location>
        <begin position="1"/>
        <end position="205"/>
    </location>
</feature>
<feature type="active site" description="Phosphoserine intermediate" evidence="1">
    <location>
        <position position="105"/>
    </location>
</feature>
<feature type="binding site" evidence="1">
    <location>
        <begin position="31"/>
        <end position="38"/>
    </location>
    <ligand>
        <name>ATP</name>
        <dbReference type="ChEBI" id="CHEBI:30616"/>
    </ligand>
</feature>
<organism>
    <name type="scientific">Shewanella baltica (strain OS185)</name>
    <dbReference type="NCBI Taxonomy" id="402882"/>
    <lineage>
        <taxon>Bacteria</taxon>
        <taxon>Pseudomonadati</taxon>
        <taxon>Pseudomonadota</taxon>
        <taxon>Gammaproteobacteria</taxon>
        <taxon>Alteromonadales</taxon>
        <taxon>Shewanellaceae</taxon>
        <taxon>Shewanella</taxon>
    </lineage>
</organism>
<accession>A6WJU6</accession>
<protein>
    <recommendedName>
        <fullName evidence="1">Adenylyl-sulfate kinase</fullName>
        <ecNumber evidence="1">2.7.1.25</ecNumber>
    </recommendedName>
    <alternativeName>
        <fullName evidence="1">APS kinase</fullName>
    </alternativeName>
    <alternativeName>
        <fullName evidence="1">ATP adenosine-5'-phosphosulfate 3'-phosphotransferase</fullName>
    </alternativeName>
    <alternativeName>
        <fullName evidence="1">Adenosine-5'-phosphosulfate kinase</fullName>
    </alternativeName>
</protein>
<proteinExistence type="inferred from homology"/>
<gene>
    <name evidence="1" type="primary">cysC</name>
    <name type="ordered locus">Shew185_0931</name>
</gene>
<comment type="function">
    <text evidence="1">Catalyzes the synthesis of activated sulfate.</text>
</comment>
<comment type="catalytic activity">
    <reaction evidence="1">
        <text>adenosine 5'-phosphosulfate + ATP = 3'-phosphoadenylyl sulfate + ADP + H(+)</text>
        <dbReference type="Rhea" id="RHEA:24152"/>
        <dbReference type="ChEBI" id="CHEBI:15378"/>
        <dbReference type="ChEBI" id="CHEBI:30616"/>
        <dbReference type="ChEBI" id="CHEBI:58243"/>
        <dbReference type="ChEBI" id="CHEBI:58339"/>
        <dbReference type="ChEBI" id="CHEBI:456216"/>
        <dbReference type="EC" id="2.7.1.25"/>
    </reaction>
</comment>
<comment type="pathway">
    <text evidence="1">Sulfur metabolism; hydrogen sulfide biosynthesis; sulfite from sulfate: step 2/3.</text>
</comment>
<comment type="similarity">
    <text evidence="1">Belongs to the APS kinase family.</text>
</comment>
<evidence type="ECO:0000255" key="1">
    <source>
        <dbReference type="HAMAP-Rule" id="MF_00065"/>
    </source>
</evidence>